<reference key="1">
    <citation type="journal article" date="1989" name="Z. Naturforsch. C">
        <title>Carnivora: the amino acid sequence of the adult European polecat (Mustela putorius, Mustelidae) hemoglobins.</title>
        <authorList>
            <person name="Ahmed A."/>
            <person name="Jahan M."/>
            <person name="Braunitzer G."/>
            <person name="Pechlaner H."/>
        </authorList>
    </citation>
    <scope>PROTEIN SEQUENCE</scope>
</reference>
<evidence type="ECO:0000250" key="1">
    <source>
        <dbReference type="UniProtKB" id="P01942"/>
    </source>
</evidence>
<evidence type="ECO:0000250" key="2">
    <source>
        <dbReference type="UniProtKB" id="P69905"/>
    </source>
</evidence>
<evidence type="ECO:0000255" key="3">
    <source>
        <dbReference type="PROSITE-ProRule" id="PRU00238"/>
    </source>
</evidence>
<evidence type="ECO:0000269" key="4">
    <source ref="1"/>
</evidence>
<accession>P23601</accession>
<name>HBA_MUSPU</name>
<protein>
    <recommendedName>
        <fullName>Hemoglobin subunit alpha-1/2</fullName>
    </recommendedName>
    <alternativeName>
        <fullName>Alpha-1/2-globin</fullName>
    </alternativeName>
    <alternativeName>
        <fullName>Hemoglobin alpha-1/2 chain</fullName>
    </alternativeName>
</protein>
<organism>
    <name type="scientific">Mustela putorius</name>
    <name type="common">European polecat</name>
    <dbReference type="NCBI Taxonomy" id="9668"/>
    <lineage>
        <taxon>Eukaryota</taxon>
        <taxon>Metazoa</taxon>
        <taxon>Chordata</taxon>
        <taxon>Craniata</taxon>
        <taxon>Vertebrata</taxon>
        <taxon>Euteleostomi</taxon>
        <taxon>Mammalia</taxon>
        <taxon>Eutheria</taxon>
        <taxon>Laurasiatheria</taxon>
        <taxon>Carnivora</taxon>
        <taxon>Caniformia</taxon>
        <taxon>Musteloidea</taxon>
        <taxon>Mustelidae</taxon>
        <taxon>Mustelinae</taxon>
        <taxon>Mustela</taxon>
    </lineage>
</organism>
<feature type="chain" id="PRO_0000052698" description="Hemoglobin subunit alpha-1/2">
    <location>
        <begin position="1"/>
        <end position="141"/>
    </location>
</feature>
<feature type="domain" description="Globin" evidence="3">
    <location>
        <begin position="1"/>
        <end position="141"/>
    </location>
</feature>
<feature type="binding site" evidence="3">
    <location>
        <position position="58"/>
    </location>
    <ligand>
        <name>O2</name>
        <dbReference type="ChEBI" id="CHEBI:15379"/>
    </ligand>
</feature>
<feature type="binding site" description="proximal binding residue" evidence="3">
    <location>
        <position position="87"/>
    </location>
    <ligand>
        <name>heme b</name>
        <dbReference type="ChEBI" id="CHEBI:60344"/>
    </ligand>
    <ligandPart>
        <name>Fe</name>
        <dbReference type="ChEBI" id="CHEBI:18248"/>
    </ligandPart>
</feature>
<feature type="modified residue" description="Phosphoserine" evidence="2">
    <location>
        <position position="3"/>
    </location>
</feature>
<feature type="modified residue" description="N6-succinyllysine" evidence="1">
    <location>
        <position position="7"/>
    </location>
</feature>
<feature type="modified residue" description="Phosphothreonine" evidence="2">
    <location>
        <position position="8"/>
    </location>
</feature>
<feature type="modified residue" description="N6-succinyllysine" evidence="1">
    <location>
        <position position="11"/>
    </location>
</feature>
<feature type="modified residue" description="N6-acetyllysine; alternate" evidence="2">
    <location>
        <position position="16"/>
    </location>
</feature>
<feature type="modified residue" description="N6-succinyllysine; alternate" evidence="1">
    <location>
        <position position="16"/>
    </location>
</feature>
<feature type="modified residue" description="Phosphotyrosine" evidence="2">
    <location>
        <position position="24"/>
    </location>
</feature>
<feature type="modified residue" description="Phosphoserine" evidence="2">
    <location>
        <position position="35"/>
    </location>
</feature>
<feature type="modified residue" description="N6-succinyllysine" evidence="1">
    <location>
        <position position="40"/>
    </location>
</feature>
<feature type="modified residue" description="Phosphoserine" evidence="2">
    <location>
        <position position="49"/>
    </location>
</feature>
<feature type="modified residue" description="Phosphoserine" evidence="1">
    <location>
        <position position="102"/>
    </location>
</feature>
<feature type="modified residue" description="Phosphothreonine" evidence="1">
    <location>
        <position position="108"/>
    </location>
</feature>
<feature type="modified residue" description="Phosphoserine" evidence="1">
    <location>
        <position position="124"/>
    </location>
</feature>
<feature type="modified residue" description="Phosphothreonine" evidence="1">
    <location>
        <position position="134"/>
    </location>
</feature>
<feature type="modified residue" description="Phosphothreonine" evidence="1">
    <location>
        <position position="137"/>
    </location>
</feature>
<feature type="modified residue" description="Phosphoserine" evidence="1">
    <location>
        <position position="138"/>
    </location>
</feature>
<feature type="sequence variant" description="In alpha-2." evidence="4">
    <original>D</original>
    <variation>G</variation>
    <location>
        <position position="15"/>
    </location>
</feature>
<comment type="function">
    <text>Involved in oxygen transport from the lung to the various peripheral tissues.</text>
</comment>
<comment type="subunit">
    <text>Heterotetramer of two alpha chains and two beta chains.</text>
</comment>
<comment type="tissue specificity">
    <text>Red blood cells.</text>
</comment>
<comment type="polymorphism">
    <text evidence="4">There are two alleles. The sequence shown is that of alpha-1.</text>
</comment>
<comment type="similarity">
    <text evidence="3">Belongs to the globin family.</text>
</comment>
<proteinExistence type="evidence at protein level"/>
<keyword id="KW-0007">Acetylation</keyword>
<keyword id="KW-0903">Direct protein sequencing</keyword>
<keyword id="KW-0349">Heme</keyword>
<keyword id="KW-0408">Iron</keyword>
<keyword id="KW-0479">Metal-binding</keyword>
<keyword id="KW-0561">Oxygen transport</keyword>
<keyword id="KW-0597">Phosphoprotein</keyword>
<keyword id="KW-0813">Transport</keyword>
<dbReference type="PIR" id="S10102">
    <property type="entry name" value="HAUK1E"/>
</dbReference>
<dbReference type="PIR" id="S20158">
    <property type="entry name" value="HAUK2E"/>
</dbReference>
<dbReference type="SMR" id="P23601"/>
<dbReference type="GO" id="GO:0072562">
    <property type="term" value="C:blood microparticle"/>
    <property type="evidence" value="ECO:0007669"/>
    <property type="project" value="TreeGrafter"/>
</dbReference>
<dbReference type="GO" id="GO:0031838">
    <property type="term" value="C:haptoglobin-hemoglobin complex"/>
    <property type="evidence" value="ECO:0007669"/>
    <property type="project" value="TreeGrafter"/>
</dbReference>
<dbReference type="GO" id="GO:0005833">
    <property type="term" value="C:hemoglobin complex"/>
    <property type="evidence" value="ECO:0007669"/>
    <property type="project" value="InterPro"/>
</dbReference>
<dbReference type="GO" id="GO:0031720">
    <property type="term" value="F:haptoglobin binding"/>
    <property type="evidence" value="ECO:0007669"/>
    <property type="project" value="TreeGrafter"/>
</dbReference>
<dbReference type="GO" id="GO:0020037">
    <property type="term" value="F:heme binding"/>
    <property type="evidence" value="ECO:0007669"/>
    <property type="project" value="InterPro"/>
</dbReference>
<dbReference type="GO" id="GO:0005506">
    <property type="term" value="F:iron ion binding"/>
    <property type="evidence" value="ECO:0007669"/>
    <property type="project" value="InterPro"/>
</dbReference>
<dbReference type="GO" id="GO:0043177">
    <property type="term" value="F:organic acid binding"/>
    <property type="evidence" value="ECO:0007669"/>
    <property type="project" value="TreeGrafter"/>
</dbReference>
<dbReference type="GO" id="GO:0019825">
    <property type="term" value="F:oxygen binding"/>
    <property type="evidence" value="ECO:0007669"/>
    <property type="project" value="InterPro"/>
</dbReference>
<dbReference type="GO" id="GO:0005344">
    <property type="term" value="F:oxygen carrier activity"/>
    <property type="evidence" value="ECO:0007669"/>
    <property type="project" value="UniProtKB-KW"/>
</dbReference>
<dbReference type="GO" id="GO:0004601">
    <property type="term" value="F:peroxidase activity"/>
    <property type="evidence" value="ECO:0007669"/>
    <property type="project" value="TreeGrafter"/>
</dbReference>
<dbReference type="GO" id="GO:0042744">
    <property type="term" value="P:hydrogen peroxide catabolic process"/>
    <property type="evidence" value="ECO:0007669"/>
    <property type="project" value="TreeGrafter"/>
</dbReference>
<dbReference type="CDD" id="cd08927">
    <property type="entry name" value="Hb-alpha-like"/>
    <property type="match status" value="1"/>
</dbReference>
<dbReference type="FunFam" id="1.10.490.10:FF:000002">
    <property type="entry name" value="Hemoglobin subunit alpha"/>
    <property type="match status" value="1"/>
</dbReference>
<dbReference type="Gene3D" id="1.10.490.10">
    <property type="entry name" value="Globins"/>
    <property type="match status" value="1"/>
</dbReference>
<dbReference type="InterPro" id="IPR000971">
    <property type="entry name" value="Globin"/>
</dbReference>
<dbReference type="InterPro" id="IPR009050">
    <property type="entry name" value="Globin-like_sf"/>
</dbReference>
<dbReference type="InterPro" id="IPR012292">
    <property type="entry name" value="Globin/Proto"/>
</dbReference>
<dbReference type="InterPro" id="IPR002338">
    <property type="entry name" value="Hemoglobin_a-typ"/>
</dbReference>
<dbReference type="InterPro" id="IPR050056">
    <property type="entry name" value="Hemoglobin_oxygen_transport"/>
</dbReference>
<dbReference type="InterPro" id="IPR002339">
    <property type="entry name" value="Hemoglobin_pi"/>
</dbReference>
<dbReference type="PANTHER" id="PTHR11442">
    <property type="entry name" value="HEMOGLOBIN FAMILY MEMBER"/>
    <property type="match status" value="1"/>
</dbReference>
<dbReference type="PANTHER" id="PTHR11442:SF48">
    <property type="entry name" value="HEMOGLOBIN SUBUNIT ALPHA"/>
    <property type="match status" value="1"/>
</dbReference>
<dbReference type="Pfam" id="PF00042">
    <property type="entry name" value="Globin"/>
    <property type="match status" value="1"/>
</dbReference>
<dbReference type="PRINTS" id="PR00612">
    <property type="entry name" value="ALPHAHAEM"/>
</dbReference>
<dbReference type="PRINTS" id="PR00815">
    <property type="entry name" value="PIHAEM"/>
</dbReference>
<dbReference type="SUPFAM" id="SSF46458">
    <property type="entry name" value="Globin-like"/>
    <property type="match status" value="1"/>
</dbReference>
<dbReference type="PROSITE" id="PS01033">
    <property type="entry name" value="GLOBIN"/>
    <property type="match status" value="1"/>
</dbReference>
<sequence length="141" mass="15231">VLSPADKTNVKSTWDKIGGHAGEYGGEALERTFASFPTTKTYFPHFDLSHGSAQVKAHGKKVADALTNAVAHMDDLPGALSALSDLHAYKLRVDPVNFKLLSHCLLVTLACHHPAEFTPAVHASLDKFFSAVSTVLTSKYR</sequence>